<protein>
    <recommendedName>
        <fullName evidence="1">Large ribosomal subunit protein uL24</fullName>
    </recommendedName>
    <alternativeName>
        <fullName evidence="2">50S ribosomal protein L24</fullName>
    </alternativeName>
</protein>
<reference key="1">
    <citation type="journal article" date="2003" name="Proc. Natl. Acad. Sci. U.S.A.">
        <title>The complete genome sequence of the Arabidopsis and tomato pathogen Pseudomonas syringae pv. tomato DC3000.</title>
        <authorList>
            <person name="Buell C.R."/>
            <person name="Joardar V."/>
            <person name="Lindeberg M."/>
            <person name="Selengut J."/>
            <person name="Paulsen I.T."/>
            <person name="Gwinn M.L."/>
            <person name="Dodson R.J."/>
            <person name="DeBoy R.T."/>
            <person name="Durkin A.S."/>
            <person name="Kolonay J.F."/>
            <person name="Madupu R."/>
            <person name="Daugherty S.C."/>
            <person name="Brinkac L.M."/>
            <person name="Beanan M.J."/>
            <person name="Haft D.H."/>
            <person name="Nelson W.C."/>
            <person name="Davidsen T.M."/>
            <person name="Zafar N."/>
            <person name="Zhou L."/>
            <person name="Liu J."/>
            <person name="Yuan Q."/>
            <person name="Khouri H.M."/>
            <person name="Fedorova N.B."/>
            <person name="Tran B."/>
            <person name="Russell D."/>
            <person name="Berry K.J."/>
            <person name="Utterback T.R."/>
            <person name="Van Aken S.E."/>
            <person name="Feldblyum T.V."/>
            <person name="D'Ascenzo M."/>
            <person name="Deng W.-L."/>
            <person name="Ramos A.R."/>
            <person name="Alfano J.R."/>
            <person name="Cartinhour S."/>
            <person name="Chatterjee A.K."/>
            <person name="Delaney T.P."/>
            <person name="Lazarowitz S.G."/>
            <person name="Martin G.B."/>
            <person name="Schneider D.J."/>
            <person name="Tang X."/>
            <person name="Bender C.L."/>
            <person name="White O."/>
            <person name="Fraser C.M."/>
            <person name="Collmer A."/>
        </authorList>
    </citation>
    <scope>NUCLEOTIDE SEQUENCE [LARGE SCALE GENOMIC DNA]</scope>
    <source>
        <strain>ATCC BAA-871 / DC3000</strain>
    </source>
</reference>
<sequence length="104" mass="11287">MQKIRRDDEIIVIAGKDKGKRGKVLKVLADDRLVVGGINLVKRHTKPNPMSGVQGGIVEKEAPLHASNVAIFNGATNKADRVGFKVEDGKKIRVFKSTQKAVDA</sequence>
<dbReference type="EMBL" id="AE016853">
    <property type="protein sequence ID" value="AAO54179.1"/>
    <property type="molecule type" value="Genomic_DNA"/>
</dbReference>
<dbReference type="RefSeq" id="NP_790484.1">
    <property type="nucleotide sequence ID" value="NC_004578.1"/>
</dbReference>
<dbReference type="RefSeq" id="WP_002555478.1">
    <property type="nucleotide sequence ID" value="NC_004578.1"/>
</dbReference>
<dbReference type="SMR" id="Q889W0"/>
<dbReference type="STRING" id="223283.PSPTO_0637"/>
<dbReference type="GeneID" id="96221019"/>
<dbReference type="KEGG" id="pst:PSPTO_0637"/>
<dbReference type="PATRIC" id="fig|223283.9.peg.643"/>
<dbReference type="eggNOG" id="COG0198">
    <property type="taxonomic scope" value="Bacteria"/>
</dbReference>
<dbReference type="HOGENOM" id="CLU_093315_2_2_6"/>
<dbReference type="OrthoDB" id="9807419at2"/>
<dbReference type="PhylomeDB" id="Q889W0"/>
<dbReference type="Proteomes" id="UP000002515">
    <property type="component" value="Chromosome"/>
</dbReference>
<dbReference type="GO" id="GO:1990904">
    <property type="term" value="C:ribonucleoprotein complex"/>
    <property type="evidence" value="ECO:0007669"/>
    <property type="project" value="UniProtKB-KW"/>
</dbReference>
<dbReference type="GO" id="GO:0005840">
    <property type="term" value="C:ribosome"/>
    <property type="evidence" value="ECO:0007669"/>
    <property type="project" value="UniProtKB-KW"/>
</dbReference>
<dbReference type="GO" id="GO:0019843">
    <property type="term" value="F:rRNA binding"/>
    <property type="evidence" value="ECO:0007669"/>
    <property type="project" value="UniProtKB-UniRule"/>
</dbReference>
<dbReference type="GO" id="GO:0003735">
    <property type="term" value="F:structural constituent of ribosome"/>
    <property type="evidence" value="ECO:0007669"/>
    <property type="project" value="InterPro"/>
</dbReference>
<dbReference type="GO" id="GO:0006412">
    <property type="term" value="P:translation"/>
    <property type="evidence" value="ECO:0007669"/>
    <property type="project" value="UniProtKB-UniRule"/>
</dbReference>
<dbReference type="CDD" id="cd06089">
    <property type="entry name" value="KOW_RPL26"/>
    <property type="match status" value="1"/>
</dbReference>
<dbReference type="FunFam" id="2.30.30.30:FF:000004">
    <property type="entry name" value="50S ribosomal protein L24"/>
    <property type="match status" value="1"/>
</dbReference>
<dbReference type="Gene3D" id="2.30.30.30">
    <property type="match status" value="1"/>
</dbReference>
<dbReference type="HAMAP" id="MF_01326_B">
    <property type="entry name" value="Ribosomal_uL24_B"/>
    <property type="match status" value="1"/>
</dbReference>
<dbReference type="InterPro" id="IPR005824">
    <property type="entry name" value="KOW"/>
</dbReference>
<dbReference type="InterPro" id="IPR014722">
    <property type="entry name" value="Rib_uL2_dom2"/>
</dbReference>
<dbReference type="InterPro" id="IPR003256">
    <property type="entry name" value="Ribosomal_uL24"/>
</dbReference>
<dbReference type="InterPro" id="IPR005825">
    <property type="entry name" value="Ribosomal_uL24_CS"/>
</dbReference>
<dbReference type="InterPro" id="IPR041988">
    <property type="entry name" value="Ribosomal_uL24_KOW"/>
</dbReference>
<dbReference type="InterPro" id="IPR008991">
    <property type="entry name" value="Translation_prot_SH3-like_sf"/>
</dbReference>
<dbReference type="NCBIfam" id="TIGR01079">
    <property type="entry name" value="rplX_bact"/>
    <property type="match status" value="1"/>
</dbReference>
<dbReference type="PANTHER" id="PTHR12903">
    <property type="entry name" value="MITOCHONDRIAL RIBOSOMAL PROTEIN L24"/>
    <property type="match status" value="1"/>
</dbReference>
<dbReference type="Pfam" id="PF00467">
    <property type="entry name" value="KOW"/>
    <property type="match status" value="1"/>
</dbReference>
<dbReference type="Pfam" id="PF17136">
    <property type="entry name" value="ribosomal_L24"/>
    <property type="match status" value="1"/>
</dbReference>
<dbReference type="SMART" id="SM00739">
    <property type="entry name" value="KOW"/>
    <property type="match status" value="1"/>
</dbReference>
<dbReference type="SUPFAM" id="SSF50104">
    <property type="entry name" value="Translation proteins SH3-like domain"/>
    <property type="match status" value="1"/>
</dbReference>
<dbReference type="PROSITE" id="PS01108">
    <property type="entry name" value="RIBOSOMAL_L24"/>
    <property type="match status" value="1"/>
</dbReference>
<feature type="chain" id="PRO_0000130699" description="Large ribosomal subunit protein uL24">
    <location>
        <begin position="1"/>
        <end position="104"/>
    </location>
</feature>
<comment type="function">
    <text evidence="1">One of two assembly initiator proteins, it binds directly to the 5'-end of the 23S rRNA, where it nucleates assembly of the 50S subunit.</text>
</comment>
<comment type="function">
    <text evidence="1">One of the proteins that surrounds the polypeptide exit tunnel on the outside of the subunit.</text>
</comment>
<comment type="subunit">
    <text evidence="1">Part of the 50S ribosomal subunit.</text>
</comment>
<comment type="similarity">
    <text evidence="1">Belongs to the universal ribosomal protein uL24 family.</text>
</comment>
<organism>
    <name type="scientific">Pseudomonas syringae pv. tomato (strain ATCC BAA-871 / DC3000)</name>
    <dbReference type="NCBI Taxonomy" id="223283"/>
    <lineage>
        <taxon>Bacteria</taxon>
        <taxon>Pseudomonadati</taxon>
        <taxon>Pseudomonadota</taxon>
        <taxon>Gammaproteobacteria</taxon>
        <taxon>Pseudomonadales</taxon>
        <taxon>Pseudomonadaceae</taxon>
        <taxon>Pseudomonas</taxon>
    </lineage>
</organism>
<gene>
    <name evidence="1" type="primary">rplX</name>
    <name type="ordered locus">PSPTO_0637</name>
</gene>
<proteinExistence type="inferred from homology"/>
<keyword id="KW-1185">Reference proteome</keyword>
<keyword id="KW-0687">Ribonucleoprotein</keyword>
<keyword id="KW-0689">Ribosomal protein</keyword>
<keyword id="KW-0694">RNA-binding</keyword>
<keyword id="KW-0699">rRNA-binding</keyword>
<evidence type="ECO:0000255" key="1">
    <source>
        <dbReference type="HAMAP-Rule" id="MF_01326"/>
    </source>
</evidence>
<evidence type="ECO:0000305" key="2"/>
<name>RL24_PSESM</name>
<accession>Q889W0</accession>